<reference key="1">
    <citation type="journal article" date="2004" name="Nat. Genet.">
        <title>Complete sequencing and characterization of 21,243 full-length human cDNAs.</title>
        <authorList>
            <person name="Ota T."/>
            <person name="Suzuki Y."/>
            <person name="Nishikawa T."/>
            <person name="Otsuki T."/>
            <person name="Sugiyama T."/>
            <person name="Irie R."/>
            <person name="Wakamatsu A."/>
            <person name="Hayashi K."/>
            <person name="Sato H."/>
            <person name="Nagai K."/>
            <person name="Kimura K."/>
            <person name="Makita H."/>
            <person name="Sekine M."/>
            <person name="Obayashi M."/>
            <person name="Nishi T."/>
            <person name="Shibahara T."/>
            <person name="Tanaka T."/>
            <person name="Ishii S."/>
            <person name="Yamamoto J."/>
            <person name="Saito K."/>
            <person name="Kawai Y."/>
            <person name="Isono Y."/>
            <person name="Nakamura Y."/>
            <person name="Nagahari K."/>
            <person name="Murakami K."/>
            <person name="Yasuda T."/>
            <person name="Iwayanagi T."/>
            <person name="Wagatsuma M."/>
            <person name="Shiratori A."/>
            <person name="Sudo H."/>
            <person name="Hosoiri T."/>
            <person name="Kaku Y."/>
            <person name="Kodaira H."/>
            <person name="Kondo H."/>
            <person name="Sugawara M."/>
            <person name="Takahashi M."/>
            <person name="Kanda K."/>
            <person name="Yokoi T."/>
            <person name="Furuya T."/>
            <person name="Kikkawa E."/>
            <person name="Omura Y."/>
            <person name="Abe K."/>
            <person name="Kamihara K."/>
            <person name="Katsuta N."/>
            <person name="Sato K."/>
            <person name="Tanikawa M."/>
            <person name="Yamazaki M."/>
            <person name="Ninomiya K."/>
            <person name="Ishibashi T."/>
            <person name="Yamashita H."/>
            <person name="Murakawa K."/>
            <person name="Fujimori K."/>
            <person name="Tanai H."/>
            <person name="Kimata M."/>
            <person name="Watanabe M."/>
            <person name="Hiraoka S."/>
            <person name="Chiba Y."/>
            <person name="Ishida S."/>
            <person name="Ono Y."/>
            <person name="Takiguchi S."/>
            <person name="Watanabe S."/>
            <person name="Yosida M."/>
            <person name="Hotuta T."/>
            <person name="Kusano J."/>
            <person name="Kanehori K."/>
            <person name="Takahashi-Fujii A."/>
            <person name="Hara H."/>
            <person name="Tanase T.-O."/>
            <person name="Nomura Y."/>
            <person name="Togiya S."/>
            <person name="Komai F."/>
            <person name="Hara R."/>
            <person name="Takeuchi K."/>
            <person name="Arita M."/>
            <person name="Imose N."/>
            <person name="Musashino K."/>
            <person name="Yuuki H."/>
            <person name="Oshima A."/>
            <person name="Sasaki N."/>
            <person name="Aotsuka S."/>
            <person name="Yoshikawa Y."/>
            <person name="Matsunawa H."/>
            <person name="Ichihara T."/>
            <person name="Shiohata N."/>
            <person name="Sano S."/>
            <person name="Moriya S."/>
            <person name="Momiyama H."/>
            <person name="Satoh N."/>
            <person name="Takami S."/>
            <person name="Terashima Y."/>
            <person name="Suzuki O."/>
            <person name="Nakagawa S."/>
            <person name="Senoh A."/>
            <person name="Mizoguchi H."/>
            <person name="Goto Y."/>
            <person name="Shimizu F."/>
            <person name="Wakebe H."/>
            <person name="Hishigaki H."/>
            <person name="Watanabe T."/>
            <person name="Sugiyama A."/>
            <person name="Takemoto M."/>
            <person name="Kawakami B."/>
            <person name="Yamazaki M."/>
            <person name="Watanabe K."/>
            <person name="Kumagai A."/>
            <person name="Itakura S."/>
            <person name="Fukuzumi Y."/>
            <person name="Fujimori Y."/>
            <person name="Komiyama M."/>
            <person name="Tashiro H."/>
            <person name="Tanigami A."/>
            <person name="Fujiwara T."/>
            <person name="Ono T."/>
            <person name="Yamada K."/>
            <person name="Fujii Y."/>
            <person name="Ozaki K."/>
            <person name="Hirao M."/>
            <person name="Ohmori Y."/>
            <person name="Kawabata A."/>
            <person name="Hikiji T."/>
            <person name="Kobatake N."/>
            <person name="Inagaki H."/>
            <person name="Ikema Y."/>
            <person name="Okamoto S."/>
            <person name="Okitani R."/>
            <person name="Kawakami T."/>
            <person name="Noguchi S."/>
            <person name="Itoh T."/>
            <person name="Shigeta K."/>
            <person name="Senba T."/>
            <person name="Matsumura K."/>
            <person name="Nakajima Y."/>
            <person name="Mizuno T."/>
            <person name="Morinaga M."/>
            <person name="Sasaki M."/>
            <person name="Togashi T."/>
            <person name="Oyama M."/>
            <person name="Hata H."/>
            <person name="Watanabe M."/>
            <person name="Komatsu T."/>
            <person name="Mizushima-Sugano J."/>
            <person name="Satoh T."/>
            <person name="Shirai Y."/>
            <person name="Takahashi Y."/>
            <person name="Nakagawa K."/>
            <person name="Okumura K."/>
            <person name="Nagase T."/>
            <person name="Nomura N."/>
            <person name="Kikuchi H."/>
            <person name="Masuho Y."/>
            <person name="Yamashita R."/>
            <person name="Nakai K."/>
            <person name="Yada T."/>
            <person name="Nakamura Y."/>
            <person name="Ohara O."/>
            <person name="Isogai T."/>
            <person name="Sugano S."/>
        </authorList>
    </citation>
    <scope>NUCLEOTIDE SEQUENCE [LARGE SCALE MRNA] (ISOFORM 2)</scope>
    <source>
        <tissue>Testis</tissue>
    </source>
</reference>
<reference key="2">
    <citation type="journal article" date="2006" name="Nature">
        <title>The DNA sequence, annotation and analysis of human chromosome 3.</title>
        <authorList>
            <person name="Muzny D.M."/>
            <person name="Scherer S.E."/>
            <person name="Kaul R."/>
            <person name="Wang J."/>
            <person name="Yu J."/>
            <person name="Sudbrak R."/>
            <person name="Buhay C.J."/>
            <person name="Chen R."/>
            <person name="Cree A."/>
            <person name="Ding Y."/>
            <person name="Dugan-Rocha S."/>
            <person name="Gill R."/>
            <person name="Gunaratne P."/>
            <person name="Harris R.A."/>
            <person name="Hawes A.C."/>
            <person name="Hernandez J."/>
            <person name="Hodgson A.V."/>
            <person name="Hume J."/>
            <person name="Jackson A."/>
            <person name="Khan Z.M."/>
            <person name="Kovar-Smith C."/>
            <person name="Lewis L.R."/>
            <person name="Lozado R.J."/>
            <person name="Metzker M.L."/>
            <person name="Milosavljevic A."/>
            <person name="Miner G.R."/>
            <person name="Morgan M.B."/>
            <person name="Nazareth L.V."/>
            <person name="Scott G."/>
            <person name="Sodergren E."/>
            <person name="Song X.-Z."/>
            <person name="Steffen D."/>
            <person name="Wei S."/>
            <person name="Wheeler D.A."/>
            <person name="Wright M.W."/>
            <person name="Worley K.C."/>
            <person name="Yuan Y."/>
            <person name="Zhang Z."/>
            <person name="Adams C.Q."/>
            <person name="Ansari-Lari M.A."/>
            <person name="Ayele M."/>
            <person name="Brown M.J."/>
            <person name="Chen G."/>
            <person name="Chen Z."/>
            <person name="Clendenning J."/>
            <person name="Clerc-Blankenburg K.P."/>
            <person name="Chen R."/>
            <person name="Chen Z."/>
            <person name="Davis C."/>
            <person name="Delgado O."/>
            <person name="Dinh H.H."/>
            <person name="Dong W."/>
            <person name="Draper H."/>
            <person name="Ernst S."/>
            <person name="Fu G."/>
            <person name="Gonzalez-Garay M.L."/>
            <person name="Garcia D.K."/>
            <person name="Gillett W."/>
            <person name="Gu J."/>
            <person name="Hao B."/>
            <person name="Haugen E."/>
            <person name="Havlak P."/>
            <person name="He X."/>
            <person name="Hennig S."/>
            <person name="Hu S."/>
            <person name="Huang W."/>
            <person name="Jackson L.R."/>
            <person name="Jacob L.S."/>
            <person name="Kelly S.H."/>
            <person name="Kube M."/>
            <person name="Levy R."/>
            <person name="Li Z."/>
            <person name="Liu B."/>
            <person name="Liu J."/>
            <person name="Liu W."/>
            <person name="Lu J."/>
            <person name="Maheshwari M."/>
            <person name="Nguyen B.-V."/>
            <person name="Okwuonu G.O."/>
            <person name="Palmeiri A."/>
            <person name="Pasternak S."/>
            <person name="Perez L.M."/>
            <person name="Phelps K.A."/>
            <person name="Plopper F.J."/>
            <person name="Qiang B."/>
            <person name="Raymond C."/>
            <person name="Rodriguez R."/>
            <person name="Saenphimmachak C."/>
            <person name="Santibanez J."/>
            <person name="Shen H."/>
            <person name="Shen Y."/>
            <person name="Subramanian S."/>
            <person name="Tabor P.E."/>
            <person name="Verduzco D."/>
            <person name="Waldron L."/>
            <person name="Wang J."/>
            <person name="Wang J."/>
            <person name="Wang Q."/>
            <person name="Williams G.A."/>
            <person name="Wong G.K.-S."/>
            <person name="Yao Z."/>
            <person name="Zhang J."/>
            <person name="Zhang X."/>
            <person name="Zhao G."/>
            <person name="Zhou J."/>
            <person name="Zhou Y."/>
            <person name="Nelson D."/>
            <person name="Lehrach H."/>
            <person name="Reinhardt R."/>
            <person name="Naylor S.L."/>
            <person name="Yang H."/>
            <person name="Olson M."/>
            <person name="Weinstock G."/>
            <person name="Gibbs R.A."/>
        </authorList>
    </citation>
    <scope>NUCLEOTIDE SEQUENCE [LARGE SCALE GENOMIC DNA]</scope>
</reference>
<reference key="3">
    <citation type="journal article" date="2004" name="Genome Res.">
        <title>The status, quality, and expansion of the NIH full-length cDNA project: the Mammalian Gene Collection (MGC).</title>
        <authorList>
            <consortium name="The MGC Project Team"/>
        </authorList>
    </citation>
    <scope>NUCLEOTIDE SEQUENCE [LARGE SCALE MRNA] (ISOFORM 1)</scope>
    <source>
        <tissue>Placenta</tissue>
        <tissue>Testis</tissue>
    </source>
</reference>
<reference key="4">
    <citation type="submission" date="2001-01" db="EMBL/GenBank/DDBJ databases">
        <title>Identification of FKSG45, a novel gene located on human chromosome 3.</title>
        <authorList>
            <person name="Wang Y.-G."/>
            <person name="Li T."/>
        </authorList>
    </citation>
    <scope>NUCLEOTIDE SEQUENCE [MRNA] OF 305-755 (ISOFORM 1)</scope>
</reference>
<reference key="5">
    <citation type="journal article" date="2000" name="Gene">
        <title>Ubiquitin-like proteins: new wines in new bottles.</title>
        <authorList>
            <person name="Yeh E.T.H."/>
            <person name="Gong L."/>
            <person name="Kamitani T."/>
        </authorList>
    </citation>
    <scope>REVIEW</scope>
</reference>
<reference key="6">
    <citation type="journal article" date="2006" name="J. Biol. Chem.">
        <title>Characterization of a family of nucleolar SUMO-specific proteases with preference for SUMO-2 or SUMO-3.</title>
        <authorList>
            <person name="Gong L."/>
            <person name="Yeh E.T.H."/>
        </authorList>
    </citation>
    <scope>FUNCTION</scope>
    <scope>SUBCELLULAR LOCATION</scope>
    <scope>MUTAGENESIS OF CYS-713</scope>
</reference>
<reference key="7">
    <citation type="journal article" date="2006" name="Mol. Cell. Biol.">
        <title>The SUMO-specific protease SENP5 is required for cell division.</title>
        <authorList>
            <person name="Di Bacco A."/>
            <person name="Ouyang J."/>
            <person name="Lee H.-Y."/>
            <person name="Catic A."/>
            <person name="Ploegh H."/>
            <person name="Gill G."/>
        </authorList>
    </citation>
    <scope>FUNCTION</scope>
    <scope>SUBCELLULAR LOCATION</scope>
    <scope>MUTAGENESIS OF CYS-713</scope>
</reference>
<reference key="8">
    <citation type="journal article" date="2009" name="Sci. Signal.">
        <title>Quantitative phosphoproteomic analysis of T cell receptor signaling reveals system-wide modulation of protein-protein interactions.</title>
        <authorList>
            <person name="Mayya V."/>
            <person name="Lundgren D.H."/>
            <person name="Hwang S.-I."/>
            <person name="Rezaul K."/>
            <person name="Wu L."/>
            <person name="Eng J.K."/>
            <person name="Rodionov V."/>
            <person name="Han D.K."/>
        </authorList>
    </citation>
    <scope>IDENTIFICATION BY MASS SPECTROMETRY [LARGE SCALE ANALYSIS]</scope>
    <source>
        <tissue>Leukemic T-cell</tissue>
    </source>
</reference>
<reference key="9">
    <citation type="journal article" date="2014" name="Nat. Commun.">
        <title>Modification of DBC1 by SUMO2/3 is crucial for p53-mediated apoptosis in response to DNA damage.</title>
        <authorList>
            <person name="Park J.H."/>
            <person name="Lee S.W."/>
            <person name="Yang S.W."/>
            <person name="Yoo H.M."/>
            <person name="Park J.M."/>
            <person name="Seong M.W."/>
            <person name="Ka S.H."/>
            <person name="Oh K.H."/>
            <person name="Jeon Y.J."/>
            <person name="Chung C.H."/>
        </authorList>
    </citation>
    <scope>INTERACTION WITH CCAR2</scope>
</reference>
<dbReference type="EC" id="3.4.22.-"/>
<dbReference type="EMBL" id="AK302305">
    <property type="protein sequence ID" value="BAG63644.1"/>
    <property type="molecule type" value="mRNA"/>
</dbReference>
<dbReference type="EMBL" id="AC011322">
    <property type="status" value="NOT_ANNOTATED_CDS"/>
    <property type="molecule type" value="Genomic_DNA"/>
</dbReference>
<dbReference type="EMBL" id="AC016949">
    <property type="status" value="NOT_ANNOTATED_CDS"/>
    <property type="molecule type" value="Genomic_DNA"/>
</dbReference>
<dbReference type="EMBL" id="AC127904">
    <property type="status" value="NOT_ANNOTATED_CDS"/>
    <property type="molecule type" value="Genomic_DNA"/>
</dbReference>
<dbReference type="EMBL" id="BC008589">
    <property type="protein sequence ID" value="AAH08589.1"/>
    <property type="molecule type" value="mRNA"/>
</dbReference>
<dbReference type="EMBL" id="BC030705">
    <property type="protein sequence ID" value="AAH30705.1"/>
    <property type="molecule type" value="mRNA"/>
</dbReference>
<dbReference type="EMBL" id="AF335474">
    <property type="protein sequence ID" value="AAK69630.1"/>
    <property type="status" value="ALT_INIT"/>
    <property type="molecule type" value="mRNA"/>
</dbReference>
<dbReference type="CCDS" id="CCDS3322.1">
    <molecule id="Q96HI0-1"/>
</dbReference>
<dbReference type="CCDS" id="CCDS77876.1">
    <molecule id="Q96HI0-2"/>
</dbReference>
<dbReference type="RefSeq" id="NP_001294974.1">
    <molecule id="Q96HI0-2"/>
    <property type="nucleotide sequence ID" value="NM_001308045.2"/>
</dbReference>
<dbReference type="RefSeq" id="NP_689912.2">
    <molecule id="Q96HI0-1"/>
    <property type="nucleotide sequence ID" value="NM_152699.5"/>
</dbReference>
<dbReference type="RefSeq" id="XP_011510846.1">
    <property type="nucleotide sequence ID" value="XM_011512544.2"/>
</dbReference>
<dbReference type="RefSeq" id="XP_016861359.1">
    <property type="nucleotide sequence ID" value="XM_017005870.1"/>
</dbReference>
<dbReference type="SMR" id="Q96HI0"/>
<dbReference type="BioGRID" id="128497">
    <property type="interactions" value="65"/>
</dbReference>
<dbReference type="DIP" id="DIP-62043N"/>
<dbReference type="FunCoup" id="Q96HI0">
    <property type="interactions" value="3156"/>
</dbReference>
<dbReference type="IntAct" id="Q96HI0">
    <property type="interactions" value="54"/>
</dbReference>
<dbReference type="STRING" id="9606.ENSP00000327197"/>
<dbReference type="BindingDB" id="Q96HI0"/>
<dbReference type="ChEMBL" id="CHEMBL4802012"/>
<dbReference type="MEROPS" id="C48.008"/>
<dbReference type="GlyGen" id="Q96HI0">
    <property type="glycosylation" value="1 site, 1 O-linked glycan (1 site)"/>
</dbReference>
<dbReference type="iPTMnet" id="Q96HI0"/>
<dbReference type="PhosphoSitePlus" id="Q96HI0"/>
<dbReference type="BioMuta" id="SENP5"/>
<dbReference type="DMDM" id="296452962"/>
<dbReference type="jPOST" id="Q96HI0"/>
<dbReference type="MassIVE" id="Q96HI0"/>
<dbReference type="PaxDb" id="9606-ENSP00000327197"/>
<dbReference type="PeptideAtlas" id="Q96HI0"/>
<dbReference type="ProteomicsDB" id="5507"/>
<dbReference type="ProteomicsDB" id="76753">
    <molecule id="Q96HI0-1"/>
</dbReference>
<dbReference type="Pumba" id="Q96HI0"/>
<dbReference type="Antibodypedia" id="33951">
    <property type="antibodies" value="325 antibodies from 31 providers"/>
</dbReference>
<dbReference type="DNASU" id="205564"/>
<dbReference type="Ensembl" id="ENST00000323460.10">
    <molecule id="Q96HI0-1"/>
    <property type="protein sequence ID" value="ENSP00000327197.5"/>
    <property type="gene ID" value="ENSG00000119231.11"/>
</dbReference>
<dbReference type="Ensembl" id="ENST00000445299.6">
    <molecule id="Q96HI0-2"/>
    <property type="protein sequence ID" value="ENSP00000390231.2"/>
    <property type="gene ID" value="ENSG00000119231.11"/>
</dbReference>
<dbReference type="GeneID" id="205564"/>
<dbReference type="KEGG" id="hsa:205564"/>
<dbReference type="MANE-Select" id="ENST00000323460.10">
    <property type="protein sequence ID" value="ENSP00000327197.5"/>
    <property type="RefSeq nucleotide sequence ID" value="NM_152699.5"/>
    <property type="RefSeq protein sequence ID" value="NP_689912.2"/>
</dbReference>
<dbReference type="UCSC" id="uc003fwz.5">
    <molecule id="Q96HI0-1"/>
    <property type="organism name" value="human"/>
</dbReference>
<dbReference type="AGR" id="HGNC:28407"/>
<dbReference type="CTD" id="205564"/>
<dbReference type="DisGeNET" id="205564"/>
<dbReference type="GeneCards" id="SENP5"/>
<dbReference type="HGNC" id="HGNC:28407">
    <property type="gene designation" value="SENP5"/>
</dbReference>
<dbReference type="HPA" id="ENSG00000119231">
    <property type="expression patterns" value="Low tissue specificity"/>
</dbReference>
<dbReference type="MIM" id="612845">
    <property type="type" value="gene"/>
</dbReference>
<dbReference type="neXtProt" id="NX_Q96HI0"/>
<dbReference type="OpenTargets" id="ENSG00000119231"/>
<dbReference type="PharmGKB" id="PA134917083"/>
<dbReference type="VEuPathDB" id="HostDB:ENSG00000119231"/>
<dbReference type="eggNOG" id="KOG0778">
    <property type="taxonomic scope" value="Eukaryota"/>
</dbReference>
<dbReference type="GeneTree" id="ENSGT00940000159865"/>
<dbReference type="HOGENOM" id="CLU_021414_1_0_1"/>
<dbReference type="InParanoid" id="Q96HI0"/>
<dbReference type="OMA" id="IFISVME"/>
<dbReference type="OrthoDB" id="1939479at2759"/>
<dbReference type="PAN-GO" id="Q96HI0">
    <property type="GO annotations" value="3 GO annotations based on evolutionary models"/>
</dbReference>
<dbReference type="PhylomeDB" id="Q96HI0"/>
<dbReference type="TreeFam" id="TF316289"/>
<dbReference type="BRENDA" id="3.4.22.B73">
    <property type="organism ID" value="2681"/>
</dbReference>
<dbReference type="PathwayCommons" id="Q96HI0"/>
<dbReference type="Reactome" id="R-HSA-3065679">
    <property type="pathway name" value="SUMO is proteolytically processed"/>
</dbReference>
<dbReference type="SignaLink" id="Q96HI0"/>
<dbReference type="BioGRID-ORCS" id="205564">
    <property type="hits" value="10 hits in 1161 CRISPR screens"/>
</dbReference>
<dbReference type="CD-CODE" id="91857CE7">
    <property type="entry name" value="Nucleolus"/>
</dbReference>
<dbReference type="ChiTaRS" id="SENP5">
    <property type="organism name" value="human"/>
</dbReference>
<dbReference type="GenomeRNAi" id="205564"/>
<dbReference type="Pharos" id="Q96HI0">
    <property type="development level" value="Tbio"/>
</dbReference>
<dbReference type="PRO" id="PR:Q96HI0"/>
<dbReference type="Proteomes" id="UP000005640">
    <property type="component" value="Chromosome 3"/>
</dbReference>
<dbReference type="RNAct" id="Q96HI0">
    <property type="molecule type" value="protein"/>
</dbReference>
<dbReference type="Bgee" id="ENSG00000119231">
    <property type="expression patterns" value="Expressed in tendon of biceps brachii and 191 other cell types or tissues"/>
</dbReference>
<dbReference type="ExpressionAtlas" id="Q96HI0">
    <property type="expression patterns" value="baseline and differential"/>
</dbReference>
<dbReference type="GO" id="GO:0005730">
    <property type="term" value="C:nucleolus"/>
    <property type="evidence" value="ECO:0007669"/>
    <property type="project" value="UniProtKB-SubCell"/>
</dbReference>
<dbReference type="GO" id="GO:0005654">
    <property type="term" value="C:nucleoplasm"/>
    <property type="evidence" value="ECO:0000304"/>
    <property type="project" value="Reactome"/>
</dbReference>
<dbReference type="GO" id="GO:0005634">
    <property type="term" value="C:nucleus"/>
    <property type="evidence" value="ECO:0000318"/>
    <property type="project" value="GO_Central"/>
</dbReference>
<dbReference type="GO" id="GO:0099524">
    <property type="term" value="C:postsynaptic cytosol"/>
    <property type="evidence" value="ECO:0007669"/>
    <property type="project" value="Ensembl"/>
</dbReference>
<dbReference type="GO" id="GO:0099523">
    <property type="term" value="C:presynaptic cytosol"/>
    <property type="evidence" value="ECO:0007669"/>
    <property type="project" value="Ensembl"/>
</dbReference>
<dbReference type="GO" id="GO:0016929">
    <property type="term" value="F:deSUMOylase activity"/>
    <property type="evidence" value="ECO:0000318"/>
    <property type="project" value="GO_Central"/>
</dbReference>
<dbReference type="GO" id="GO:0070139">
    <property type="term" value="F:SUMO-specific endopeptidase activity"/>
    <property type="evidence" value="ECO:0000269"/>
    <property type="project" value="Reactome"/>
</dbReference>
<dbReference type="GO" id="GO:0051301">
    <property type="term" value="P:cell division"/>
    <property type="evidence" value="ECO:0007669"/>
    <property type="project" value="UniProtKB-KW"/>
</dbReference>
<dbReference type="GO" id="GO:0016926">
    <property type="term" value="P:protein desumoylation"/>
    <property type="evidence" value="ECO:0000318"/>
    <property type="project" value="GO_Central"/>
</dbReference>
<dbReference type="GO" id="GO:0016925">
    <property type="term" value="P:protein sumoylation"/>
    <property type="evidence" value="ECO:0000304"/>
    <property type="project" value="Reactome"/>
</dbReference>
<dbReference type="GO" id="GO:0006508">
    <property type="term" value="P:proteolysis"/>
    <property type="evidence" value="ECO:0007669"/>
    <property type="project" value="UniProtKB-KW"/>
</dbReference>
<dbReference type="FunFam" id="3.40.395.10:FF:000002">
    <property type="entry name" value="Putative sentrin-specific protease 5"/>
    <property type="match status" value="1"/>
</dbReference>
<dbReference type="Gene3D" id="3.40.395.10">
    <property type="entry name" value="Adenoviral Proteinase, Chain A"/>
    <property type="match status" value="1"/>
</dbReference>
<dbReference type="InterPro" id="IPR038765">
    <property type="entry name" value="Papain-like_cys_pep_sf"/>
</dbReference>
<dbReference type="InterPro" id="IPR003653">
    <property type="entry name" value="Peptidase_C48_C"/>
</dbReference>
<dbReference type="InterPro" id="IPR045577">
    <property type="entry name" value="SENP3_5_cons_dom"/>
</dbReference>
<dbReference type="PANTHER" id="PTHR12606:SF10">
    <property type="entry name" value="SENTRIN-SPECIFIC PROTEASE 5"/>
    <property type="match status" value="1"/>
</dbReference>
<dbReference type="PANTHER" id="PTHR12606">
    <property type="entry name" value="SENTRIN/SUMO-SPECIFIC PROTEASE"/>
    <property type="match status" value="1"/>
</dbReference>
<dbReference type="Pfam" id="PF02902">
    <property type="entry name" value="Peptidase_C48"/>
    <property type="match status" value="1"/>
</dbReference>
<dbReference type="Pfam" id="PF19722">
    <property type="entry name" value="SENP3_5_N"/>
    <property type="match status" value="1"/>
</dbReference>
<dbReference type="SUPFAM" id="SSF54001">
    <property type="entry name" value="Cysteine proteinases"/>
    <property type="match status" value="1"/>
</dbReference>
<dbReference type="PROSITE" id="PS50600">
    <property type="entry name" value="ULP_PROTEASE"/>
    <property type="match status" value="1"/>
</dbReference>
<name>SENP5_HUMAN</name>
<keyword id="KW-0025">Alternative splicing</keyword>
<keyword id="KW-0131">Cell cycle</keyword>
<keyword id="KW-0132">Cell division</keyword>
<keyword id="KW-0378">Hydrolase</keyword>
<keyword id="KW-0539">Nucleus</keyword>
<keyword id="KW-0645">Protease</keyword>
<keyword id="KW-1267">Proteomics identification</keyword>
<keyword id="KW-1185">Reference proteome</keyword>
<keyword id="KW-0788">Thiol protease</keyword>
<keyword id="KW-0833">Ubl conjugation pathway</keyword>
<feature type="chain" id="PRO_0000101723" description="Sentrin-specific protease 5">
    <location>
        <begin position="1"/>
        <end position="755"/>
    </location>
</feature>
<feature type="region of interest" description="Disordered" evidence="2">
    <location>
        <begin position="268"/>
        <end position="321"/>
    </location>
</feature>
<feature type="region of interest" description="Protease">
    <location>
        <begin position="567"/>
        <end position="724"/>
    </location>
</feature>
<feature type="compositionally biased region" description="Basic and acidic residues" evidence="2">
    <location>
        <begin position="272"/>
        <end position="283"/>
    </location>
</feature>
<feature type="active site" evidence="1">
    <location>
        <position position="646"/>
    </location>
</feature>
<feature type="active site" evidence="1">
    <location>
        <position position="663"/>
    </location>
</feature>
<feature type="active site" evidence="7">
    <location>
        <position position="713"/>
    </location>
</feature>
<feature type="splice variant" id="VSP_056415" description="In isoform 2." evidence="6">
    <location>
        <begin position="629"/>
        <end position="674"/>
    </location>
</feature>
<feature type="sequence variant" id="VAR_057045" description="In dbSNP:rs35434690.">
    <original>N</original>
    <variation>S</variation>
    <location>
        <position position="83"/>
    </location>
</feature>
<feature type="sequence variant" id="VAR_061732" description="In dbSNP:rs34251880.">
    <original>L</original>
    <variation>F</variation>
    <location>
        <position position="340"/>
    </location>
</feature>
<feature type="mutagenesis site" description="Abolishes enzymatic activity." evidence="3 4">
    <original>C</original>
    <variation>A</variation>
    <location>
        <position position="713"/>
    </location>
</feature>
<feature type="sequence conflict" description="In Ref. 3; AAH30705." evidence="7" ref="3">
    <original>P</original>
    <variation>H</variation>
    <location>
        <position position="75"/>
    </location>
</feature>
<feature type="sequence conflict" description="In Ref. 4; AAK69630." evidence="7" ref="4">
    <original>S</original>
    <variation>C</variation>
    <location>
        <position position="538"/>
    </location>
</feature>
<comment type="function">
    <text evidence="3 4">Protease that catalyzes two essential functions in the SUMO pathway: processing of full-length SUMO3 to its mature form and deconjugation of SUMO2 and SUMO3 from targeted proteins. Has weak proteolytic activity against full-length SUMO1 or SUMO1 conjugates. Required for cell division.</text>
</comment>
<comment type="subunit">
    <text evidence="5">Interacts with CCAR2.</text>
</comment>
<comment type="interaction">
    <interactant intactId="EBI-3895753">
        <id>Q96HI0</id>
    </interactant>
    <interactant intactId="EBI-78473">
        <id>P03372</id>
        <label>ESR1</label>
    </interactant>
    <organismsDiffer>false</organismsDiffer>
    <experiments>2</experiments>
</comment>
<comment type="subcellular location">
    <subcellularLocation>
        <location evidence="3 4">Nucleus</location>
        <location evidence="3 4">Nucleolus</location>
    </subcellularLocation>
</comment>
<comment type="alternative products">
    <event type="alternative splicing"/>
    <isoform>
        <id>Q96HI0-1</id>
        <name>1</name>
        <sequence type="displayed"/>
    </isoform>
    <isoform>
        <id>Q96HI0-2</id>
        <name>2</name>
        <sequence type="described" ref="VSP_056415"/>
    </isoform>
</comment>
<comment type="similarity">
    <text evidence="7">Belongs to the peptidase C48 family.</text>
</comment>
<comment type="sequence caution" evidence="7">
    <conflict type="erroneous initiation">
        <sequence resource="EMBL-CDS" id="AAK69630"/>
    </conflict>
    <text>Truncated N-terminus.</text>
</comment>
<gene>
    <name type="primary">SENP5</name>
    <name type="ORF">FKSG45</name>
</gene>
<sequence>MKKQRKILWRKGIHLAFSEKWNTGFGGFKKFYFHQHLCILKAKLGRPVTWNRQLRHFQGRKKALQIQKTWIKDEPLCAKTKFNVATQNVSTLSSKVKRKDAKHFISSSKTLLRLQAEKLLSSAKNSDHEYCREKNLLKAVTDFPSNSALGQANGHRPRTDPQPSDFPMKFNGESQSPGESGTIVVTLNNHKRKGFCYGCCQGPEHHRNGGPLIPKKFQLNQHRRIKLSPLMMYEKLSMIRFRYRILRSQHFRTKSKVCKLRKAQRSWVQKVTGDHQETRRENGEGGSCSPFPSPEPKDPSCRHQPYFPDMDSSAVVKGTNSHVPDCHTKGSSFLGKELSLDEAFPDQQNGSATNAWDQSSCSSPKWECTELIHDIPLPEHRSNTMFISETEREIMTLGQENQTSSVSDDRVKLSVSGADTSVSSVDGPVSQKAVQNENSYQMEEDGSLKQSILSSELLDHPYCKSPLEAPLVCSGLKLENQVGGGKNSQKASPVDDEQLSVCLSGFLDEVMKKYGSLVPLSEKEVLGRLKDVFNEDFSNRKPFINREITNYRARHQKCNFRIFYNKHMLDMDDLATLDGQNWLNDQVINMYGELIMDAVPDKVHFFNSFFHRQLVTKGYNGVKRWTKKVDLFKKSLLLIPIHLEVHWSLITVTLSNRIISFYDSQGIHFKFCVENIRKYLLTEAREKNRPEFLQGWQTAVTKCIPQQKNDSDCGVFVLQYCKCLALEQPFQFSQEDMPRVRKRIYKELCECRLMD</sequence>
<evidence type="ECO:0000250" key="1"/>
<evidence type="ECO:0000256" key="2">
    <source>
        <dbReference type="SAM" id="MobiDB-lite"/>
    </source>
</evidence>
<evidence type="ECO:0000269" key="3">
    <source>
    </source>
</evidence>
<evidence type="ECO:0000269" key="4">
    <source>
    </source>
</evidence>
<evidence type="ECO:0000269" key="5">
    <source>
    </source>
</evidence>
<evidence type="ECO:0000303" key="6">
    <source>
    </source>
</evidence>
<evidence type="ECO:0000305" key="7"/>
<proteinExistence type="evidence at protein level"/>
<protein>
    <recommendedName>
        <fullName>Sentrin-specific protease 5</fullName>
        <ecNumber>3.4.22.-</ecNumber>
    </recommendedName>
    <alternativeName>
        <fullName>Sentrin/SUMO-specific protease SENP5</fullName>
    </alternativeName>
</protein>
<accession>Q96HI0</accession>
<accession>B4DY82</accession>
<accession>Q96SA5</accession>
<organism>
    <name type="scientific">Homo sapiens</name>
    <name type="common">Human</name>
    <dbReference type="NCBI Taxonomy" id="9606"/>
    <lineage>
        <taxon>Eukaryota</taxon>
        <taxon>Metazoa</taxon>
        <taxon>Chordata</taxon>
        <taxon>Craniata</taxon>
        <taxon>Vertebrata</taxon>
        <taxon>Euteleostomi</taxon>
        <taxon>Mammalia</taxon>
        <taxon>Eutheria</taxon>
        <taxon>Euarchontoglires</taxon>
        <taxon>Primates</taxon>
        <taxon>Haplorrhini</taxon>
        <taxon>Catarrhini</taxon>
        <taxon>Hominidae</taxon>
        <taxon>Homo</taxon>
    </lineage>
</organism>